<dbReference type="EMBL" id="AY653733">
    <property type="protein sequence ID" value="AAV51124.1"/>
    <property type="molecule type" value="Genomic_DNA"/>
</dbReference>
<dbReference type="KEGG" id="vg:9925529"/>
<dbReference type="OrthoDB" id="29623at10239"/>
<dbReference type="Proteomes" id="UP000001134">
    <property type="component" value="Genome"/>
</dbReference>
<dbReference type="GO" id="GO:0051260">
    <property type="term" value="P:protein homooligomerization"/>
    <property type="evidence" value="ECO:0007669"/>
    <property type="project" value="InterPro"/>
</dbReference>
<dbReference type="Gene3D" id="3.30.710.10">
    <property type="entry name" value="Potassium Channel Kv1.1, Chain A"/>
    <property type="match status" value="1"/>
</dbReference>
<dbReference type="InterPro" id="IPR011333">
    <property type="entry name" value="SKP1/BTB/POZ_sf"/>
</dbReference>
<dbReference type="InterPro" id="IPR003131">
    <property type="entry name" value="T1-type_BTB"/>
</dbReference>
<dbReference type="Pfam" id="PF02214">
    <property type="entry name" value="BTB_2"/>
    <property type="match status" value="1"/>
</dbReference>
<dbReference type="SUPFAM" id="SSF54695">
    <property type="entry name" value="POZ domain"/>
    <property type="match status" value="1"/>
</dbReference>
<reference key="1">
    <citation type="journal article" date="2004" name="Science">
        <title>The 1.2-megabase genome sequence of Mimivirus.</title>
        <authorList>
            <person name="Raoult D."/>
            <person name="Audic S."/>
            <person name="Robert C."/>
            <person name="Abergel C."/>
            <person name="Renesto P."/>
            <person name="Ogata H."/>
            <person name="La Scola B."/>
            <person name="Susan M."/>
            <person name="Claverie J.-M."/>
        </authorList>
    </citation>
    <scope>NUCLEOTIDE SEQUENCE [LARGE SCALE GENOMIC DNA]</scope>
    <source>
        <strain>Rowbotham-Bradford</strain>
    </source>
</reference>
<proteinExistence type="predicted"/>
<protein>
    <recommendedName>
        <fullName>Uncharacterized protein R866</fullName>
    </recommendedName>
</protein>
<gene>
    <name type="ordered locus">MIMI_R866</name>
</gene>
<feature type="chain" id="PRO_0000244023" description="Uncharacterized protein R866">
    <location>
        <begin position="1"/>
        <end position="431"/>
    </location>
</feature>
<keyword id="KW-1185">Reference proteome</keyword>
<sequence>MSREIIIQTNNATIYTTYSTISNIKLFTDNIQPETRVIYLNIDGLIVDGILNNIRQGLNALTNYENYDFSMCTNRNCALINIGGRKFYLPRSLLSDFDFFNEILSETEFDHNQNIIDRSPYVFDKIIDLIDNDDISNTKYFSQDVLSDLQFYKYKKIIGKLFIDNDFAYFKINGNIYDATLECNYDVDRHQVDLEDNDFDNYTIFTNSPTSNDPTHCVLWFDRYMEKLDIESIAEKIRLNDTPLSEYYSHSLEKFDPNYESPDSIEPYYVTTYPNGHTVIYFLFPNVFYPLIYIPKNIGIISHKLVYKERYQPSIIKESYTKYFPKTSIVKIDLNDVLKVMDKNFHDKILLINELYIYSEKVNYTYAEIINNGKIVCRSTLSKCKDSFTINLFNSTYNCIAYNISDNDNSKLVLYSDKETEHNIILKFEYS</sequence>
<name>YR866_MIMIV</name>
<organismHost>
    <name type="scientific">Acanthamoeba polyphaga</name>
    <name type="common">Amoeba</name>
    <dbReference type="NCBI Taxonomy" id="5757"/>
</organismHost>
<accession>Q5UP17</accession>
<organism>
    <name type="scientific">Acanthamoeba polyphaga mimivirus</name>
    <name type="common">APMV</name>
    <dbReference type="NCBI Taxonomy" id="212035"/>
    <lineage>
        <taxon>Viruses</taxon>
        <taxon>Varidnaviria</taxon>
        <taxon>Bamfordvirae</taxon>
        <taxon>Nucleocytoviricota</taxon>
        <taxon>Megaviricetes</taxon>
        <taxon>Imitervirales</taxon>
        <taxon>Mimiviridae</taxon>
        <taxon>Megamimivirinae</taxon>
        <taxon>Mimivirus</taxon>
        <taxon>Mimivirus bradfordmassiliense</taxon>
    </lineage>
</organism>